<feature type="signal peptide" evidence="1">
    <location>
        <begin position="1"/>
        <end position="28"/>
    </location>
</feature>
<feature type="chain" id="PRO_5000000624" description="Alginate lyase">
    <location>
        <begin position="29"/>
        <end position="378"/>
    </location>
</feature>
<feature type="region of interest" description="Disordered" evidence="2">
    <location>
        <begin position="359"/>
        <end position="378"/>
    </location>
</feature>
<feature type="compositionally biased region" description="Basic and acidic residues" evidence="2">
    <location>
        <begin position="364"/>
        <end position="378"/>
    </location>
</feature>
<feature type="binding site" evidence="1">
    <location>
        <begin position="67"/>
        <end position="68"/>
    </location>
    <ligand>
        <name>substrate</name>
    </ligand>
</feature>
<feature type="binding site" evidence="1">
    <location>
        <begin position="140"/>
        <end position="141"/>
    </location>
    <ligand>
        <name>substrate</name>
    </ligand>
</feature>
<feature type="binding site" evidence="1">
    <location>
        <position position="258"/>
    </location>
    <ligand>
        <name>substrate</name>
    </ligand>
</feature>
<name>ALGL_PSEU2</name>
<dbReference type="EC" id="4.2.2.3" evidence="1"/>
<dbReference type="EMBL" id="CP000075">
    <property type="protein sequence ID" value="AAY36112.1"/>
    <property type="molecule type" value="Genomic_DNA"/>
</dbReference>
<dbReference type="RefSeq" id="WP_004406765.1">
    <property type="nucleotide sequence ID" value="NC_007005.1"/>
</dbReference>
<dbReference type="RefSeq" id="YP_234150.1">
    <property type="nucleotide sequence ID" value="NC_007005.1"/>
</dbReference>
<dbReference type="SMR" id="Q4ZXL0"/>
<dbReference type="STRING" id="205918.Psyr_1056"/>
<dbReference type="CAZy" id="PL5">
    <property type="family name" value="Polysaccharide Lyase Family 5"/>
</dbReference>
<dbReference type="KEGG" id="psb:Psyr_1056"/>
<dbReference type="PATRIC" id="fig|205918.7.peg.1086"/>
<dbReference type="eggNOG" id="ENOG502ZAMJ">
    <property type="taxonomic scope" value="Bacteria"/>
</dbReference>
<dbReference type="HOGENOM" id="CLU_064286_0_0_6"/>
<dbReference type="OrthoDB" id="6972889at2"/>
<dbReference type="Proteomes" id="UP000000426">
    <property type="component" value="Chromosome"/>
</dbReference>
<dbReference type="GO" id="GO:0042597">
    <property type="term" value="C:periplasmic space"/>
    <property type="evidence" value="ECO:0007669"/>
    <property type="project" value="UniProtKB-SubCell"/>
</dbReference>
<dbReference type="GO" id="GO:0045135">
    <property type="term" value="F:poly(beta-D-mannuronate) lyase activity"/>
    <property type="evidence" value="ECO:0007669"/>
    <property type="project" value="UniProtKB-UniRule"/>
</dbReference>
<dbReference type="GO" id="GO:0042122">
    <property type="term" value="P:alginic acid catabolic process"/>
    <property type="evidence" value="ECO:0007669"/>
    <property type="project" value="UniProtKB-UniRule"/>
</dbReference>
<dbReference type="CDD" id="cd00244">
    <property type="entry name" value="AlgLyase"/>
    <property type="match status" value="1"/>
</dbReference>
<dbReference type="Gene3D" id="1.50.10.100">
    <property type="entry name" value="Chondroitin AC/alginate lyase"/>
    <property type="match status" value="1"/>
</dbReference>
<dbReference type="HAMAP" id="MF_00557">
    <property type="entry name" value="Alginate_lyase"/>
    <property type="match status" value="1"/>
</dbReference>
<dbReference type="InterPro" id="IPR022859">
    <property type="entry name" value="Alginate_lyase"/>
</dbReference>
<dbReference type="InterPro" id="IPR008397">
    <property type="entry name" value="Alginate_lyase_dom"/>
</dbReference>
<dbReference type="InterPro" id="IPR008929">
    <property type="entry name" value="Chondroitin_lyas"/>
</dbReference>
<dbReference type="NCBIfam" id="NF001467">
    <property type="entry name" value="PRK00325.1-2"/>
    <property type="match status" value="1"/>
</dbReference>
<dbReference type="NCBIfam" id="NF001468">
    <property type="entry name" value="PRK00325.1-3"/>
    <property type="match status" value="1"/>
</dbReference>
<dbReference type="Pfam" id="PF05426">
    <property type="entry name" value="Alginate_lyase"/>
    <property type="match status" value="1"/>
</dbReference>
<dbReference type="SUPFAM" id="SSF48230">
    <property type="entry name" value="Chondroitin AC/alginate lyase"/>
    <property type="match status" value="1"/>
</dbReference>
<keyword id="KW-0456">Lyase</keyword>
<keyword id="KW-0574">Periplasm</keyword>
<keyword id="KW-0732">Signal</keyword>
<sequence>MQTPKLIRPTLLSMAILSSMAWATGASAALVPPKGYDAPIEKIKTGDHSFSCEAIPKPYTDKLVFRSKYEGSDKARATLNAVSEEAFRDATKDITTLERGVSKVVMQYMRDGRPEQLDCALNMMTTWAKADALESREFNHTGKSMRKWALGSMSSAYLRLKFSESHPLANRQQDAKIIEAWFSKLADQVVSDWSNLPLDKINNHSYWAAWSVMATAVATNRQDLFDWAVKEYKVAANQVDKDGFLPNEMKRRQRALSYHNYALPPLAMIASFAQANGVDLRPENNGALKRLGDRVLAGVKDPSIFAEHNGEKQDMTDLKKDPKFAWLEPYCSLYTCSPDVLEEKHEKQPFKTFRLGGDLTKVYDPSHEKGDKGDNDGS</sequence>
<proteinExistence type="inferred from homology"/>
<evidence type="ECO:0000255" key="1">
    <source>
        <dbReference type="HAMAP-Rule" id="MF_00557"/>
    </source>
</evidence>
<evidence type="ECO:0000256" key="2">
    <source>
        <dbReference type="SAM" id="MobiDB-lite"/>
    </source>
</evidence>
<accession>Q4ZXL0</accession>
<reference key="1">
    <citation type="journal article" date="2005" name="Proc. Natl. Acad. Sci. U.S.A.">
        <title>Comparison of the complete genome sequences of Pseudomonas syringae pv. syringae B728a and pv. tomato DC3000.</title>
        <authorList>
            <person name="Feil H."/>
            <person name="Feil W.S."/>
            <person name="Chain P."/>
            <person name="Larimer F."/>
            <person name="Dibartolo G."/>
            <person name="Copeland A."/>
            <person name="Lykidis A."/>
            <person name="Trong S."/>
            <person name="Nolan M."/>
            <person name="Goltsman E."/>
            <person name="Thiel J."/>
            <person name="Malfatti S."/>
            <person name="Loper J.E."/>
            <person name="Lapidus A."/>
            <person name="Detter J.C."/>
            <person name="Land M."/>
            <person name="Richardson P.M."/>
            <person name="Kyrpides N.C."/>
            <person name="Ivanova N."/>
            <person name="Lindow S.E."/>
        </authorList>
    </citation>
    <scope>NUCLEOTIDE SEQUENCE [LARGE SCALE GENOMIC DNA]</scope>
    <source>
        <strain>B728a</strain>
    </source>
</reference>
<comment type="function">
    <text evidence="1">Catalyzes the depolymerization of alginate by cleaving the beta-1,4 glycosidic bond between two adjacent sugar residues via a beta-elimination mechanism. May serve to degrade mislocalized alginate that is trapped in the periplasmic space.</text>
</comment>
<comment type="catalytic activity">
    <reaction evidence="1">
        <text>Eliminative cleavage of alginate to give oligosaccharides with 4-deoxy-alpha-L-erythro-hex-4-enuronosyl groups at their non-reducing ends and beta-D-mannuronate at their reducing end.</text>
        <dbReference type="EC" id="4.2.2.3"/>
    </reaction>
</comment>
<comment type="subcellular location">
    <subcellularLocation>
        <location evidence="1">Periplasm</location>
    </subcellularLocation>
</comment>
<comment type="similarity">
    <text evidence="1">Belongs to the polysaccharide lyase 5 family.</text>
</comment>
<organism>
    <name type="scientific">Pseudomonas syringae pv. syringae (strain B728a)</name>
    <dbReference type="NCBI Taxonomy" id="205918"/>
    <lineage>
        <taxon>Bacteria</taxon>
        <taxon>Pseudomonadati</taxon>
        <taxon>Pseudomonadota</taxon>
        <taxon>Gammaproteobacteria</taxon>
        <taxon>Pseudomonadales</taxon>
        <taxon>Pseudomonadaceae</taxon>
        <taxon>Pseudomonas</taxon>
        <taxon>Pseudomonas syringae</taxon>
    </lineage>
</organism>
<protein>
    <recommendedName>
        <fullName evidence="1">Alginate lyase</fullName>
        <ecNumber evidence="1">4.2.2.3</ecNumber>
    </recommendedName>
    <alternativeName>
        <fullName evidence="1">Poly(beta-D-mannuronate) lyase</fullName>
    </alternativeName>
</protein>
<gene>
    <name evidence="1" type="primary">algL</name>
    <name type="ordered locus">Psyr_1056</name>
</gene>